<name>Y1887_AZOSB</name>
<feature type="chain" id="PRO_1000061585" description="UPF0246 protein azo1887">
    <location>
        <begin position="1"/>
        <end position="261"/>
    </location>
</feature>
<sequence>MIFVISPAKALDYETPPVTARFTTPDFLDDAAELIDILRTCTPADIAGLMSLSDKLASLNVARYATWSRPFAPDNAKQAILAFNGDVYEGLAATTLGEDGLAWAQDHLRILSGLYGVLRPLDLMQPYRLEMGTRLSNPRGKDLYAFWGERITTELNRLLDLERAAGREAVLVNLASEEYFKSVKPKLLKGRLVTPTFEDWKDGRYKIISFYAKRARGLMSRYAIERQLDEVEDLKAFDSDGYAFVAEASDEHSWVFRRRQD</sequence>
<accession>A1K6P9</accession>
<comment type="similarity">
    <text evidence="1">Belongs to the UPF0246 family.</text>
</comment>
<evidence type="ECO:0000255" key="1">
    <source>
        <dbReference type="HAMAP-Rule" id="MF_00652"/>
    </source>
</evidence>
<gene>
    <name type="ordered locus">azo1887</name>
</gene>
<dbReference type="EMBL" id="AM406670">
    <property type="protein sequence ID" value="CAL94504.1"/>
    <property type="molecule type" value="Genomic_DNA"/>
</dbReference>
<dbReference type="RefSeq" id="WP_011765620.1">
    <property type="nucleotide sequence ID" value="NC_008702.1"/>
</dbReference>
<dbReference type="SMR" id="A1K6P9"/>
<dbReference type="STRING" id="62928.azo1887"/>
<dbReference type="KEGG" id="azo:azo1887"/>
<dbReference type="eggNOG" id="COG3022">
    <property type="taxonomic scope" value="Bacteria"/>
</dbReference>
<dbReference type="HOGENOM" id="CLU_061989_0_0_4"/>
<dbReference type="Proteomes" id="UP000002588">
    <property type="component" value="Chromosome"/>
</dbReference>
<dbReference type="GO" id="GO:0005829">
    <property type="term" value="C:cytosol"/>
    <property type="evidence" value="ECO:0007669"/>
    <property type="project" value="TreeGrafter"/>
</dbReference>
<dbReference type="GO" id="GO:0033194">
    <property type="term" value="P:response to hydroperoxide"/>
    <property type="evidence" value="ECO:0007669"/>
    <property type="project" value="TreeGrafter"/>
</dbReference>
<dbReference type="HAMAP" id="MF_00652">
    <property type="entry name" value="UPF0246"/>
    <property type="match status" value="1"/>
</dbReference>
<dbReference type="InterPro" id="IPR005583">
    <property type="entry name" value="YaaA"/>
</dbReference>
<dbReference type="NCBIfam" id="NF002541">
    <property type="entry name" value="PRK02101.1-1"/>
    <property type="match status" value="1"/>
</dbReference>
<dbReference type="NCBIfam" id="NF002542">
    <property type="entry name" value="PRK02101.1-3"/>
    <property type="match status" value="1"/>
</dbReference>
<dbReference type="PANTHER" id="PTHR30283:SF4">
    <property type="entry name" value="PEROXIDE STRESS RESISTANCE PROTEIN YAAA"/>
    <property type="match status" value="1"/>
</dbReference>
<dbReference type="PANTHER" id="PTHR30283">
    <property type="entry name" value="PEROXIDE STRESS RESPONSE PROTEIN YAAA"/>
    <property type="match status" value="1"/>
</dbReference>
<dbReference type="Pfam" id="PF03883">
    <property type="entry name" value="H2O2_YaaD"/>
    <property type="match status" value="1"/>
</dbReference>
<organism>
    <name type="scientific">Azoarcus sp. (strain BH72)</name>
    <dbReference type="NCBI Taxonomy" id="418699"/>
    <lineage>
        <taxon>Bacteria</taxon>
        <taxon>Pseudomonadati</taxon>
        <taxon>Pseudomonadota</taxon>
        <taxon>Betaproteobacteria</taxon>
        <taxon>Rhodocyclales</taxon>
        <taxon>Zoogloeaceae</taxon>
        <taxon>Azoarcus</taxon>
    </lineage>
</organism>
<reference key="1">
    <citation type="journal article" date="2006" name="Nat. Biotechnol.">
        <title>Complete genome of the mutualistic, N2-fixing grass endophyte Azoarcus sp. strain BH72.</title>
        <authorList>
            <person name="Krause A."/>
            <person name="Ramakumar A."/>
            <person name="Bartels D."/>
            <person name="Battistoni F."/>
            <person name="Bekel T."/>
            <person name="Boch J."/>
            <person name="Boehm M."/>
            <person name="Friedrich F."/>
            <person name="Hurek T."/>
            <person name="Krause L."/>
            <person name="Linke B."/>
            <person name="McHardy A.C."/>
            <person name="Sarkar A."/>
            <person name="Schneiker S."/>
            <person name="Syed A.A."/>
            <person name="Thauer R."/>
            <person name="Vorhoelter F.-J."/>
            <person name="Weidner S."/>
            <person name="Puehler A."/>
            <person name="Reinhold-Hurek B."/>
            <person name="Kaiser O."/>
            <person name="Goesmann A."/>
        </authorList>
    </citation>
    <scope>NUCLEOTIDE SEQUENCE [LARGE SCALE GENOMIC DNA]</scope>
    <source>
        <strain>BH72</strain>
    </source>
</reference>
<proteinExistence type="inferred from homology"/>
<protein>
    <recommendedName>
        <fullName evidence="1">UPF0246 protein azo1887</fullName>
    </recommendedName>
</protein>
<keyword id="KW-1185">Reference proteome</keyword>